<proteinExistence type="evidence at protein level"/>
<reference key="1">
    <citation type="journal article" date="2005" name="Nature">
        <title>Generation and annotation of the DNA sequences of human chromosomes 2 and 4.</title>
        <authorList>
            <person name="Hillier L.W."/>
            <person name="Graves T.A."/>
            <person name="Fulton R.S."/>
            <person name="Fulton L.A."/>
            <person name="Pepin K.H."/>
            <person name="Minx P."/>
            <person name="Wagner-McPherson C."/>
            <person name="Layman D."/>
            <person name="Wylie K."/>
            <person name="Sekhon M."/>
            <person name="Becker M.C."/>
            <person name="Fewell G.A."/>
            <person name="Delehaunty K.D."/>
            <person name="Miner T.L."/>
            <person name="Nash W.E."/>
            <person name="Kremitzki C."/>
            <person name="Oddy L."/>
            <person name="Du H."/>
            <person name="Sun H."/>
            <person name="Bradshaw-Cordum H."/>
            <person name="Ali J."/>
            <person name="Carter J."/>
            <person name="Cordes M."/>
            <person name="Harris A."/>
            <person name="Isak A."/>
            <person name="van Brunt A."/>
            <person name="Nguyen C."/>
            <person name="Du F."/>
            <person name="Courtney L."/>
            <person name="Kalicki J."/>
            <person name="Ozersky P."/>
            <person name="Abbott S."/>
            <person name="Armstrong J."/>
            <person name="Belter E.A."/>
            <person name="Caruso L."/>
            <person name="Cedroni M."/>
            <person name="Cotton M."/>
            <person name="Davidson T."/>
            <person name="Desai A."/>
            <person name="Elliott G."/>
            <person name="Erb T."/>
            <person name="Fronick C."/>
            <person name="Gaige T."/>
            <person name="Haakenson W."/>
            <person name="Haglund K."/>
            <person name="Holmes A."/>
            <person name="Harkins R."/>
            <person name="Kim K."/>
            <person name="Kruchowski S.S."/>
            <person name="Strong C.M."/>
            <person name="Grewal N."/>
            <person name="Goyea E."/>
            <person name="Hou S."/>
            <person name="Levy A."/>
            <person name="Martinka S."/>
            <person name="Mead K."/>
            <person name="McLellan M.D."/>
            <person name="Meyer R."/>
            <person name="Randall-Maher J."/>
            <person name="Tomlinson C."/>
            <person name="Dauphin-Kohlberg S."/>
            <person name="Kozlowicz-Reilly A."/>
            <person name="Shah N."/>
            <person name="Swearengen-Shahid S."/>
            <person name="Snider J."/>
            <person name="Strong J.T."/>
            <person name="Thompson J."/>
            <person name="Yoakum M."/>
            <person name="Leonard S."/>
            <person name="Pearman C."/>
            <person name="Trani L."/>
            <person name="Radionenko M."/>
            <person name="Waligorski J.E."/>
            <person name="Wang C."/>
            <person name="Rock S.M."/>
            <person name="Tin-Wollam A.-M."/>
            <person name="Maupin R."/>
            <person name="Latreille P."/>
            <person name="Wendl M.C."/>
            <person name="Yang S.-P."/>
            <person name="Pohl C."/>
            <person name="Wallis J.W."/>
            <person name="Spieth J."/>
            <person name="Bieri T.A."/>
            <person name="Berkowicz N."/>
            <person name="Nelson J.O."/>
            <person name="Osborne J."/>
            <person name="Ding L."/>
            <person name="Meyer R."/>
            <person name="Sabo A."/>
            <person name="Shotland Y."/>
            <person name="Sinha P."/>
            <person name="Wohldmann P.E."/>
            <person name="Cook L.L."/>
            <person name="Hickenbotham M.T."/>
            <person name="Eldred J."/>
            <person name="Williams D."/>
            <person name="Jones T.A."/>
            <person name="She X."/>
            <person name="Ciccarelli F.D."/>
            <person name="Izaurralde E."/>
            <person name="Taylor J."/>
            <person name="Schmutz J."/>
            <person name="Myers R.M."/>
            <person name="Cox D.R."/>
            <person name="Huang X."/>
            <person name="McPherson J.D."/>
            <person name="Mardis E.R."/>
            <person name="Clifton S.W."/>
            <person name="Warren W.C."/>
            <person name="Chinwalla A.T."/>
            <person name="Eddy S.R."/>
            <person name="Marra M.A."/>
            <person name="Ovcharenko I."/>
            <person name="Furey T.S."/>
            <person name="Miller W."/>
            <person name="Eichler E.E."/>
            <person name="Bork P."/>
            <person name="Suyama M."/>
            <person name="Torrents D."/>
            <person name="Waterston R.H."/>
            <person name="Wilson R.K."/>
        </authorList>
    </citation>
    <scope>NUCLEOTIDE SEQUENCE [LARGE SCALE GENOMIC DNA]</scope>
</reference>
<reference key="2">
    <citation type="journal article" date="2004" name="Genome Res.">
        <title>The status, quality, and expansion of the NIH full-length cDNA project: the Mammalian Gene Collection (MGC).</title>
        <authorList>
            <consortium name="The MGC Project Team"/>
        </authorList>
    </citation>
    <scope>NUCLEOTIDE SEQUENCE [LARGE SCALE MRNA]</scope>
    <source>
        <tissue>Colon</tissue>
        <tissue>Uterus</tissue>
    </source>
</reference>
<reference key="3">
    <citation type="journal article" date="2004" name="Gene">
        <title>A novel nucleolar protein, PAPA-1, induces growth arrest as a result of cell cycle arrest at the G1 phase.</title>
        <authorList>
            <person name="Kuroda T.S."/>
            <person name="Maita H."/>
            <person name="Tabata T."/>
            <person name="Taira T."/>
            <person name="Kitaura H."/>
            <person name="Ariga H."/>
            <person name="Iguchi-Ariga S.M.M."/>
        </authorList>
    </citation>
    <scope>NUCLEOTIDE SEQUENCE [MRNA] OF 2-356</scope>
    <scope>SUBCELLULAR LOCATION</scope>
    <scope>INTERACTION WITH RP9</scope>
    <scope>FUNCTION</scope>
    <source>
        <tissue>Colon tumor</tissue>
    </source>
</reference>
<reference key="4">
    <citation type="journal article" date="2005" name="J. Biol. Chem.">
        <title>A mammalian chromatin remodeling complex with similarities to the yeast INO80 complex.</title>
        <authorList>
            <person name="Jin J."/>
            <person name="Cai Y."/>
            <person name="Yao T."/>
            <person name="Gottschalk A.J."/>
            <person name="Florens L."/>
            <person name="Swanson S.K."/>
            <person name="Gutierrez J.L."/>
            <person name="Coleman M.K."/>
            <person name="Workman J.L."/>
            <person name="Mushegian A."/>
            <person name="Washburn M.P."/>
            <person name="Conaway R.C."/>
            <person name="Conaway J.W."/>
        </authorList>
    </citation>
    <scope>IDENTIFICATION IN INO80 COMPLEX</scope>
    <scope>IDENTIFICATION BY MASS SPECTROMETRY</scope>
</reference>
<reference key="5">
    <citation type="journal article" date="2008" name="Mol. Cell">
        <title>Distinct modes of regulation of the Uch37 deubiquitinating enzyme in the proteasome and in the Ino80 chromatin-remodeling complex.</title>
        <authorList>
            <person name="Yao T."/>
            <person name="Song L."/>
            <person name="Jin J."/>
            <person name="Cai Y."/>
            <person name="Takahashi H."/>
            <person name="Swanson S.K."/>
            <person name="Washburn M.P."/>
            <person name="Florens L."/>
            <person name="Conaway R.C."/>
            <person name="Cohen R.E."/>
            <person name="Conaway J.W."/>
        </authorList>
    </citation>
    <scope>IDENTIFICATION IN THE INO80 COMPLEX</scope>
    <scope>SUBCELLULAR LOCATION</scope>
    <scope>IDENTIFICATION BY MASS SPECTROMETRY</scope>
</reference>
<reference key="6">
    <citation type="journal article" date="2011" name="J. Biol. Chem.">
        <title>Subunit organization of the human INO80 chromatin remodeling complex: An evolutionarily conserved core complex catalyzes ATP-dependent nucleosome remodeling.</title>
        <authorList>
            <person name="Chen L."/>
            <person name="Cai Y."/>
            <person name="Jin J."/>
            <person name="Florens L."/>
            <person name="Swanson S.K."/>
            <person name="Washburn M.P."/>
            <person name="Conaway J.W."/>
            <person name="Conaway R.C."/>
        </authorList>
    </citation>
    <scope>IDENTIFICATION IN THE INO80 COMPLEX</scope>
</reference>
<accession>Q9C086</accession>
<feature type="chain" id="PRO_0000173554" description="INO80 complex subunit B">
    <location>
        <begin position="1"/>
        <end position="356"/>
    </location>
</feature>
<feature type="zinc finger region" description="HIT-type">
    <location>
        <begin position="305"/>
        <end position="336"/>
    </location>
</feature>
<feature type="region of interest" description="Disordered" evidence="3">
    <location>
        <begin position="1"/>
        <end position="71"/>
    </location>
</feature>
<feature type="region of interest" description="Disordered" evidence="3">
    <location>
        <begin position="124"/>
        <end position="150"/>
    </location>
</feature>
<feature type="region of interest" description="Disordered" evidence="3">
    <location>
        <begin position="246"/>
        <end position="269"/>
    </location>
</feature>
<feature type="region of interest" description="Disordered" evidence="3">
    <location>
        <begin position="286"/>
        <end position="310"/>
    </location>
</feature>
<feature type="coiled-coil region" evidence="2">
    <location>
        <begin position="213"/>
        <end position="245"/>
    </location>
</feature>
<feature type="compositionally biased region" description="Basic residues" evidence="3">
    <location>
        <begin position="33"/>
        <end position="51"/>
    </location>
</feature>
<feature type="modified residue" description="Phosphoserine" evidence="1">
    <location>
        <position position="97"/>
    </location>
</feature>
<feature type="modified residue" description="Phosphoserine" evidence="1">
    <location>
        <position position="99"/>
    </location>
</feature>
<feature type="modified residue" description="Phosphoserine" evidence="1">
    <location>
        <position position="127"/>
    </location>
</feature>
<feature type="modified residue" description="Phosphoserine" evidence="1">
    <location>
        <position position="130"/>
    </location>
</feature>
<feature type="modified residue" description="Phosphoserine" evidence="1">
    <location>
        <position position="132"/>
    </location>
</feature>
<feature type="sequence variant" id="VAR_055083" description="In dbSNP:rs1054209.">
    <original>W</original>
    <variation>G</variation>
    <location>
        <position position="152"/>
    </location>
</feature>
<feature type="sequence conflict" description="In Ref. 3; BAB21111." evidence="8" ref="3">
    <original>S</original>
    <variation>G</variation>
    <location>
        <position position="2"/>
    </location>
</feature>
<keyword id="KW-0002">3D-structure</keyword>
<keyword id="KW-0175">Coiled coil</keyword>
<keyword id="KW-0227">DNA damage</keyword>
<keyword id="KW-0233">DNA recombination</keyword>
<keyword id="KW-0234">DNA repair</keyword>
<keyword id="KW-0479">Metal-binding</keyword>
<keyword id="KW-0539">Nucleus</keyword>
<keyword id="KW-0597">Phosphoprotein</keyword>
<keyword id="KW-1267">Proteomics identification</keyword>
<keyword id="KW-1185">Reference proteome</keyword>
<keyword id="KW-0804">Transcription</keyword>
<keyword id="KW-0805">Transcription regulation</keyword>
<keyword id="KW-0862">Zinc</keyword>
<keyword id="KW-0863">Zinc-finger</keyword>
<organism>
    <name type="scientific">Homo sapiens</name>
    <name type="common">Human</name>
    <dbReference type="NCBI Taxonomy" id="9606"/>
    <lineage>
        <taxon>Eukaryota</taxon>
        <taxon>Metazoa</taxon>
        <taxon>Chordata</taxon>
        <taxon>Craniata</taxon>
        <taxon>Vertebrata</taxon>
        <taxon>Euteleostomi</taxon>
        <taxon>Mammalia</taxon>
        <taxon>Eutheria</taxon>
        <taxon>Euarchontoglires</taxon>
        <taxon>Primates</taxon>
        <taxon>Haplorrhini</taxon>
        <taxon>Catarrhini</taxon>
        <taxon>Hominidae</taxon>
        <taxon>Homo</taxon>
    </lineage>
</organism>
<sequence>MSKLWRRGSTSGAMEAPEPGEALELSLAGAHGHGVHKKKHKKHKKKHKKKHHQEEDAGPTQPSPAKPQLKLKIKLGGQVLGTKSVPTFTVIPEGPRSPSPLMVVDNEEEPMEGVPLEQYRAWLDEDSNLSPSPLRDLSGGLGGQEEEEEQRWLDALEKGELDDNGDLKKEINERLLTARQRALLQKARSQPSPMLPLPVAEGCPPPALTEEMLLKREERARKRRLQAARRAEEHKNQTIERLTKTAATSGRGGRGGARGERRGGRAAAPAPMVRYCSGAQGSTLSFPPGVPAPTAVSQRPSPSGPPPRCSVPGCPHPRRYACSRTGQALCSLQCYRINLQMRLGGPEGPGSPLLAT</sequence>
<name>IN80B_HUMAN</name>
<dbReference type="EMBL" id="AC005041">
    <property type="status" value="NOT_ANNOTATED_CDS"/>
    <property type="molecule type" value="Genomic_DNA"/>
</dbReference>
<dbReference type="EMBL" id="BC050666">
    <property type="protein sequence ID" value="AAH50666.2"/>
    <property type="molecule type" value="mRNA"/>
</dbReference>
<dbReference type="EMBL" id="BC064425">
    <property type="protein sequence ID" value="AAH64425.2"/>
    <property type="molecule type" value="mRNA"/>
</dbReference>
<dbReference type="EMBL" id="AB054538">
    <property type="protein sequence ID" value="BAB21111.1"/>
    <property type="status" value="ALT_INIT"/>
    <property type="molecule type" value="mRNA"/>
</dbReference>
<dbReference type="CCDS" id="CCDS1942.2"/>
<dbReference type="RefSeq" id="NP_112578.2">
    <property type="nucleotide sequence ID" value="NM_031288.4"/>
</dbReference>
<dbReference type="PDB" id="6HTS">
    <property type="method" value="EM"/>
    <property type="resolution" value="4.80 A"/>
    <property type="chains" value="R=1-356"/>
</dbReference>
<dbReference type="PDB" id="7ZI4">
    <property type="method" value="EM"/>
    <property type="resolution" value="3.20 A"/>
    <property type="chains" value="R=1-356"/>
</dbReference>
<dbReference type="PDBsum" id="6HTS"/>
<dbReference type="PDBsum" id="7ZI4"/>
<dbReference type="EMDB" id="EMD-14737"/>
<dbReference type="EMDB" id="EMD-3954"/>
<dbReference type="SMR" id="Q9C086"/>
<dbReference type="BioGRID" id="123646">
    <property type="interactions" value="308"/>
</dbReference>
<dbReference type="ComplexPortal" id="CPX-846">
    <property type="entry name" value="INO80 chromatin remodeling complex"/>
</dbReference>
<dbReference type="CORUM" id="Q9C086"/>
<dbReference type="FunCoup" id="Q9C086">
    <property type="interactions" value="1275"/>
</dbReference>
<dbReference type="IntAct" id="Q9C086">
    <property type="interactions" value="94"/>
</dbReference>
<dbReference type="MINT" id="Q9C086"/>
<dbReference type="STRING" id="9606.ENSP00000233331"/>
<dbReference type="GlyGen" id="Q9C086">
    <property type="glycosylation" value="1 site"/>
</dbReference>
<dbReference type="iPTMnet" id="Q9C086"/>
<dbReference type="PhosphoSitePlus" id="Q9C086"/>
<dbReference type="BioMuta" id="INO80B"/>
<dbReference type="DMDM" id="229462939"/>
<dbReference type="jPOST" id="Q9C086"/>
<dbReference type="MassIVE" id="Q9C086"/>
<dbReference type="PaxDb" id="9606-ENSP00000233331"/>
<dbReference type="PeptideAtlas" id="Q9C086"/>
<dbReference type="ProteomicsDB" id="79964"/>
<dbReference type="Pumba" id="Q9C086"/>
<dbReference type="Antibodypedia" id="51509">
    <property type="antibodies" value="63 antibodies from 14 providers"/>
</dbReference>
<dbReference type="DNASU" id="83444"/>
<dbReference type="Ensembl" id="ENST00000233331.12">
    <property type="protein sequence ID" value="ENSP00000233331.7"/>
    <property type="gene ID" value="ENSG00000115274.15"/>
</dbReference>
<dbReference type="GeneID" id="83444"/>
<dbReference type="KEGG" id="hsa:83444"/>
<dbReference type="MANE-Select" id="ENST00000233331.12">
    <property type="protein sequence ID" value="ENSP00000233331.7"/>
    <property type="RefSeq nucleotide sequence ID" value="NM_031288.4"/>
    <property type="RefSeq protein sequence ID" value="NP_112578.2"/>
</dbReference>
<dbReference type="UCSC" id="uc002slg.3">
    <property type="organism name" value="human"/>
</dbReference>
<dbReference type="AGR" id="HGNC:13324"/>
<dbReference type="CTD" id="83444"/>
<dbReference type="DisGeNET" id="83444"/>
<dbReference type="GeneCards" id="INO80B"/>
<dbReference type="HGNC" id="HGNC:13324">
    <property type="gene designation" value="INO80B"/>
</dbReference>
<dbReference type="HPA" id="ENSG00000115274">
    <property type="expression patterns" value="Low tissue specificity"/>
</dbReference>
<dbReference type="MIM" id="616456">
    <property type="type" value="gene"/>
</dbReference>
<dbReference type="neXtProt" id="NX_Q9C086"/>
<dbReference type="OpenTargets" id="ENSG00000115274"/>
<dbReference type="PharmGKB" id="PA162392117"/>
<dbReference type="VEuPathDB" id="HostDB:ENSG00000115274"/>
<dbReference type="eggNOG" id="ENOG502QUQX">
    <property type="taxonomic scope" value="Eukaryota"/>
</dbReference>
<dbReference type="GeneTree" id="ENSGT00390000001754"/>
<dbReference type="HOGENOM" id="CLU_070409_0_0_1"/>
<dbReference type="InParanoid" id="Q9C086"/>
<dbReference type="OMA" id="PMPALEC"/>
<dbReference type="OrthoDB" id="2021186at2759"/>
<dbReference type="PAN-GO" id="Q9C086">
    <property type="GO annotations" value="1 GO annotation based on evolutionary models"/>
</dbReference>
<dbReference type="PhylomeDB" id="Q9C086"/>
<dbReference type="TreeFam" id="TF105373"/>
<dbReference type="PathwayCommons" id="Q9C086"/>
<dbReference type="Reactome" id="R-HSA-5689603">
    <property type="pathway name" value="UCH proteinases"/>
</dbReference>
<dbReference type="Reactome" id="R-HSA-5696394">
    <property type="pathway name" value="DNA Damage Recognition in GG-NER"/>
</dbReference>
<dbReference type="SignaLink" id="Q9C086"/>
<dbReference type="SIGNOR" id="Q9C086"/>
<dbReference type="BioGRID-ORCS" id="83444">
    <property type="hits" value="294 hits in 1167 CRISPR screens"/>
</dbReference>
<dbReference type="CD-CODE" id="91857CE7">
    <property type="entry name" value="Nucleolus"/>
</dbReference>
<dbReference type="GenomeRNAi" id="83444"/>
<dbReference type="Pharos" id="Q9C086">
    <property type="development level" value="Tbio"/>
</dbReference>
<dbReference type="PRO" id="PR:Q9C086"/>
<dbReference type="Proteomes" id="UP000005640">
    <property type="component" value="Chromosome 2"/>
</dbReference>
<dbReference type="RNAct" id="Q9C086">
    <property type="molecule type" value="protein"/>
</dbReference>
<dbReference type="Bgee" id="ENSG00000115274">
    <property type="expression patterns" value="Expressed in sural nerve and 94 other cell types or tissues"/>
</dbReference>
<dbReference type="ExpressionAtlas" id="Q9C086">
    <property type="expression patterns" value="baseline and differential"/>
</dbReference>
<dbReference type="GO" id="GO:0031011">
    <property type="term" value="C:Ino80 complex"/>
    <property type="evidence" value="ECO:0000314"/>
    <property type="project" value="UniProtKB"/>
</dbReference>
<dbReference type="GO" id="GO:0016604">
    <property type="term" value="C:nuclear body"/>
    <property type="evidence" value="ECO:0000314"/>
    <property type="project" value="HPA"/>
</dbReference>
<dbReference type="GO" id="GO:0005730">
    <property type="term" value="C:nucleolus"/>
    <property type="evidence" value="ECO:0000314"/>
    <property type="project" value="HPA"/>
</dbReference>
<dbReference type="GO" id="GO:0005654">
    <property type="term" value="C:nucleoplasm"/>
    <property type="evidence" value="ECO:0000314"/>
    <property type="project" value="HPA"/>
</dbReference>
<dbReference type="GO" id="GO:0008270">
    <property type="term" value="F:zinc ion binding"/>
    <property type="evidence" value="ECO:0007669"/>
    <property type="project" value="UniProtKB-KW"/>
</dbReference>
<dbReference type="GO" id="GO:0006338">
    <property type="term" value="P:chromatin remodeling"/>
    <property type="evidence" value="ECO:0000314"/>
    <property type="project" value="ComplexPortal"/>
</dbReference>
<dbReference type="GO" id="GO:0006310">
    <property type="term" value="P:DNA recombination"/>
    <property type="evidence" value="ECO:0007669"/>
    <property type="project" value="UniProtKB-KW"/>
</dbReference>
<dbReference type="GO" id="GO:0006281">
    <property type="term" value="P:DNA repair"/>
    <property type="evidence" value="ECO:0007669"/>
    <property type="project" value="UniProtKB-KW"/>
</dbReference>
<dbReference type="GO" id="GO:0045739">
    <property type="term" value="P:positive regulation of DNA repair"/>
    <property type="evidence" value="ECO:0000266"/>
    <property type="project" value="ComplexPortal"/>
</dbReference>
<dbReference type="GO" id="GO:0045893">
    <property type="term" value="P:positive regulation of DNA-templated transcription"/>
    <property type="evidence" value="ECO:0000315"/>
    <property type="project" value="ComplexPortal"/>
</dbReference>
<dbReference type="GO" id="GO:1904507">
    <property type="term" value="P:positive regulation of telomere maintenance in response to DNA damage"/>
    <property type="evidence" value="ECO:0000266"/>
    <property type="project" value="ComplexPortal"/>
</dbReference>
<dbReference type="GO" id="GO:0051726">
    <property type="term" value="P:regulation of cell cycle"/>
    <property type="evidence" value="ECO:0000315"/>
    <property type="project" value="ComplexPortal"/>
</dbReference>
<dbReference type="GO" id="GO:0033044">
    <property type="term" value="P:regulation of chromosome organization"/>
    <property type="evidence" value="ECO:0000315"/>
    <property type="project" value="ComplexPortal"/>
</dbReference>
<dbReference type="GO" id="GO:0006282">
    <property type="term" value="P:regulation of DNA repair"/>
    <property type="evidence" value="ECO:0000266"/>
    <property type="project" value="ComplexPortal"/>
</dbReference>
<dbReference type="GO" id="GO:0006275">
    <property type="term" value="P:regulation of DNA replication"/>
    <property type="evidence" value="ECO:0000315"/>
    <property type="project" value="ComplexPortal"/>
</dbReference>
<dbReference type="GO" id="GO:0060382">
    <property type="term" value="P:regulation of DNA strand elongation"/>
    <property type="evidence" value="ECO:0000315"/>
    <property type="project" value="ComplexPortal"/>
</dbReference>
<dbReference type="GO" id="GO:0045995">
    <property type="term" value="P:regulation of embryonic development"/>
    <property type="evidence" value="ECO:0000266"/>
    <property type="project" value="ComplexPortal"/>
</dbReference>
<dbReference type="GO" id="GO:0000723">
    <property type="term" value="P:telomere maintenance"/>
    <property type="evidence" value="ECO:0000266"/>
    <property type="project" value="ComplexPortal"/>
</dbReference>
<dbReference type="CDD" id="cd23021">
    <property type="entry name" value="zf-HIT_IN80B"/>
    <property type="match status" value="1"/>
</dbReference>
<dbReference type="InterPro" id="IPR029523">
    <property type="entry name" value="INO80B/Ies2"/>
</dbReference>
<dbReference type="InterPro" id="IPR006880">
    <property type="entry name" value="INO80B_C"/>
</dbReference>
<dbReference type="InterPro" id="IPR007529">
    <property type="entry name" value="Znf_HIT"/>
</dbReference>
<dbReference type="PANTHER" id="PTHR21561">
    <property type="entry name" value="INO80 COMPLEX SUBUNIT B"/>
    <property type="match status" value="1"/>
</dbReference>
<dbReference type="PANTHER" id="PTHR21561:SF12">
    <property type="entry name" value="INO80 COMPLEX SUBUNIT B"/>
    <property type="match status" value="1"/>
</dbReference>
<dbReference type="Pfam" id="PF04795">
    <property type="entry name" value="PAPA-1"/>
    <property type="match status" value="1"/>
</dbReference>
<dbReference type="Pfam" id="PF04438">
    <property type="entry name" value="zf-HIT"/>
    <property type="match status" value="1"/>
</dbReference>
<dbReference type="SMART" id="SM01406">
    <property type="entry name" value="PAPA-1"/>
    <property type="match status" value="1"/>
</dbReference>
<gene>
    <name type="primary">INO80B</name>
    <name type="synonym">HMGA1L4</name>
    <name type="synonym">PAPA1</name>
    <name type="synonym">ZNHIT4</name>
</gene>
<evidence type="ECO:0000250" key="1">
    <source>
        <dbReference type="UniProtKB" id="Q99PT3"/>
    </source>
</evidence>
<evidence type="ECO:0000255" key="2"/>
<evidence type="ECO:0000256" key="3">
    <source>
        <dbReference type="SAM" id="MobiDB-lite"/>
    </source>
</evidence>
<evidence type="ECO:0000269" key="4">
    <source>
    </source>
</evidence>
<evidence type="ECO:0000269" key="5">
    <source>
    </source>
</evidence>
<evidence type="ECO:0000269" key="6">
    <source>
    </source>
</evidence>
<evidence type="ECO:0000269" key="7">
    <source>
    </source>
</evidence>
<evidence type="ECO:0000305" key="8"/>
<comment type="function">
    <text evidence="4">Induces growth and cell cycle arrests at the G1 phase of the cell cycle.</text>
</comment>
<comment type="function">
    <text evidence="4">Proposed core component of the chromatin remodeling INO80 complex which is involved in transcriptional regulation, DNA replication and probably DNA repair.</text>
</comment>
<comment type="subunit">
    <text evidence="4 5 6 7">Component of the chromatin remodeling INO80 complex; specifically part of a complex module associated with the helicase ATP-binding and the helicase C-terminal domain of INO80. Interacts with RP9.</text>
</comment>
<comment type="interaction">
    <interactant intactId="EBI-715611">
        <id>Q9C086</id>
    </interactant>
    <interactant intactId="EBI-11096309">
        <id>Q9NYB9-2</id>
        <label>ABI2</label>
    </interactant>
    <organismsDiffer>false</organismsDiffer>
    <experiments>3</experiments>
</comment>
<comment type="interaction">
    <interactant intactId="EBI-715611">
        <id>Q9C086</id>
    </interactant>
    <interactant intactId="EBI-11524452">
        <id>Q8N9N5-2</id>
        <label>BANP</label>
    </interactant>
    <organismsDiffer>false</organismsDiffer>
    <experiments>3</experiments>
</comment>
<comment type="interaction">
    <interactant intactId="EBI-715611">
        <id>Q9C086</id>
    </interactant>
    <interactant intactId="EBI-2548012">
        <id>Q9H2G9</id>
        <label>BLZF1</label>
    </interactant>
    <organismsDiffer>false</organismsDiffer>
    <experiments>3</experiments>
</comment>
<comment type="interaction">
    <interactant intactId="EBI-715611">
        <id>Q9C086</id>
    </interactant>
    <interactant intactId="EBI-11983447">
        <id>Q8N9W6-4</id>
        <label>BOLL</label>
    </interactant>
    <organismsDiffer>false</organismsDiffer>
    <experiments>3</experiments>
</comment>
<comment type="interaction">
    <interactant intactId="EBI-715611">
        <id>Q9C086</id>
    </interactant>
    <interactant intactId="EBI-11530605">
        <id>Q9H257-2</id>
        <label>CARD9</label>
    </interactant>
    <organismsDiffer>false</organismsDiffer>
    <experiments>3</experiments>
</comment>
<comment type="interaction">
    <interactant intactId="EBI-715611">
        <id>Q9C086</id>
    </interactant>
    <interactant intactId="EBI-2559016">
        <id>Q6NZI2</id>
        <label>CAVIN1</label>
    </interactant>
    <organismsDiffer>false</organismsDiffer>
    <experiments>3</experiments>
</comment>
<comment type="interaction">
    <interactant intactId="EBI-715611">
        <id>Q9C086</id>
    </interactant>
    <interactant intactId="EBI-739674">
        <id>Q15834</id>
        <label>CCDC85B</label>
    </interactant>
    <organismsDiffer>false</organismsDiffer>
    <experiments>3</experiments>
</comment>
<comment type="interaction">
    <interactant intactId="EBI-715611">
        <id>Q9C086</id>
    </interactant>
    <interactant intactId="EBI-1181367">
        <id>Q01850</id>
        <label>CDR2</label>
    </interactant>
    <organismsDiffer>false</organismsDiffer>
    <experiments>3</experiments>
</comment>
<comment type="interaction">
    <interactant intactId="EBI-715611">
        <id>Q9C086</id>
    </interactant>
    <interactant intactId="EBI-11063830">
        <id>Q86X02</id>
        <label>CDR2L</label>
    </interactant>
    <organismsDiffer>false</organismsDiffer>
    <experiments>3</experiments>
</comment>
<comment type="interaction">
    <interactant intactId="EBI-715611">
        <id>Q9C086</id>
    </interactant>
    <interactant intactId="EBI-739624">
        <id>Q8NHQ1</id>
        <label>CEP70</label>
    </interactant>
    <organismsDiffer>false</organismsDiffer>
    <experiments>3</experiments>
</comment>
<comment type="interaction">
    <interactant intactId="EBI-715611">
        <id>Q9C086</id>
    </interactant>
    <interactant intactId="EBI-348169">
        <id>P67870</id>
        <label>CSNK2B</label>
    </interactant>
    <organismsDiffer>false</organismsDiffer>
    <experiments>3</experiments>
</comment>
<comment type="interaction">
    <interactant intactId="EBI-715611">
        <id>Q9C086</id>
    </interactant>
    <interactant intactId="EBI-3867333">
        <id>A8MQ03</id>
        <label>CYSRT1</label>
    </interactant>
    <organismsDiffer>false</organismsDiffer>
    <experiments>3</experiments>
</comment>
<comment type="interaction">
    <interactant intactId="EBI-715611">
        <id>Q9C086</id>
    </interactant>
    <interactant intactId="EBI-710457">
        <id>Q7L190</id>
        <label>DPPA4</label>
    </interactant>
    <organismsDiffer>false</organismsDiffer>
    <experiments>3</experiments>
</comment>
<comment type="interaction">
    <interactant intactId="EBI-715611">
        <id>Q9C086</id>
    </interactant>
    <interactant intactId="EBI-739789">
        <id>Q92997</id>
        <label>DVL3</label>
    </interactant>
    <organismsDiffer>false</organismsDiffer>
    <experiments>3</experiments>
</comment>
<comment type="interaction">
    <interactant intactId="EBI-715611">
        <id>Q9C086</id>
    </interactant>
    <interactant intactId="EBI-11533409">
        <id>Q96Q35-2</id>
        <label>FLACC1</label>
    </interactant>
    <organismsDiffer>false</organismsDiffer>
    <experiments>3</experiments>
</comment>
<comment type="interaction">
    <interactant intactId="EBI-715611">
        <id>Q9C086</id>
    </interactant>
    <interactant intactId="EBI-5916454">
        <id>A6NEM1</id>
        <label>GOLGA6L9</label>
    </interactant>
    <organismsDiffer>false</organismsDiffer>
    <experiments>3</experiments>
</comment>
<comment type="interaction">
    <interactant intactId="EBI-715611">
        <id>Q9C086</id>
    </interactant>
    <interactant intactId="EBI-11519926">
        <id>Q6PI77</id>
        <label>GPRASP3</label>
    </interactant>
    <organismsDiffer>false</organismsDiffer>
    <experiments>3</experiments>
</comment>
<comment type="interaction">
    <interactant intactId="EBI-715611">
        <id>Q9C086</id>
    </interactant>
    <interactant intactId="EBI-2549423">
        <id>Q6NT76</id>
        <label>HMBOX1</label>
    </interactant>
    <organismsDiffer>false</organismsDiffer>
    <experiments>3</experiments>
</comment>
<comment type="interaction">
    <interactant intactId="EBI-715611">
        <id>Q9C086</id>
    </interactant>
    <interactant intactId="EBI-7261162">
        <id>Q9UGU5</id>
        <label>HMGXB4</label>
    </interactant>
    <organismsDiffer>false</organismsDiffer>
    <experiments>3</experiments>
</comment>
<comment type="interaction">
    <interactant intactId="EBI-715611">
        <id>Q9C086</id>
    </interactant>
    <interactant intactId="EBI-740785">
        <id>P49639</id>
        <label>HOXA1</label>
    </interactant>
    <organismsDiffer>false</organismsDiffer>
    <experiments>5</experiments>
</comment>
<comment type="interaction">
    <interactant intactId="EBI-715611">
        <id>Q9C086</id>
    </interactant>
    <interactant intactId="EBI-7116203">
        <id>O75031</id>
        <label>HSF2BP</label>
    </interactant>
    <organismsDiffer>false</organismsDiffer>
    <experiments>3</experiments>
</comment>
<comment type="interaction">
    <interactant intactId="EBI-715611">
        <id>Q9C086</id>
    </interactant>
    <interactant intactId="EBI-2504392">
        <id>P18065</id>
        <label>IGFBP2</label>
    </interactant>
    <organismsDiffer>false</organismsDiffer>
    <experiments>4</experiments>
</comment>
<comment type="interaction">
    <interactant intactId="EBI-715611">
        <id>Q9C086</id>
    </interactant>
    <interactant intactId="EBI-2556193">
        <id>Q63ZY3</id>
        <label>KANK2</label>
    </interactant>
    <organismsDiffer>false</organismsDiffer>
    <experiments>3</experiments>
</comment>
<comment type="interaction">
    <interactant intactId="EBI-715611">
        <id>Q9C086</id>
    </interactant>
    <interactant intactId="EBI-11954971">
        <id>Q96MP8-2</id>
        <label>KCTD7</label>
    </interactant>
    <organismsDiffer>false</organismsDiffer>
    <experiments>3</experiments>
</comment>
<comment type="interaction">
    <interactant intactId="EBI-715611">
        <id>Q9C086</id>
    </interactant>
    <interactant intactId="EBI-1047093">
        <id>O76011</id>
        <label>KRT34</label>
    </interactant>
    <organismsDiffer>false</organismsDiffer>
    <experiments>3</experiments>
</comment>
<comment type="interaction">
    <interactant intactId="EBI-715611">
        <id>Q9C086</id>
    </interactant>
    <interactant intactId="EBI-10171697">
        <id>Q6A162</id>
        <label>KRT40</label>
    </interactant>
    <organismsDiffer>false</organismsDiffer>
    <experiments>3</experiments>
</comment>
<comment type="interaction">
    <interactant intactId="EBI-715611">
        <id>Q9C086</id>
    </interactant>
    <interactant intactId="EBI-10171774">
        <id>P60410</id>
        <label>KRTAP10-8</label>
    </interactant>
    <organismsDiffer>false</organismsDiffer>
    <experiments>3</experiments>
</comment>
<comment type="interaction">
    <interactant intactId="EBI-715611">
        <id>Q9C086</id>
    </interactant>
    <interactant intactId="EBI-10176379">
        <id>P59991</id>
        <label>KRTAP12-2</label>
    </interactant>
    <organismsDiffer>false</organismsDiffer>
    <experiments>3</experiments>
</comment>
<comment type="interaction">
    <interactant intactId="EBI-715611">
        <id>Q9C086</id>
    </interactant>
    <interactant intactId="EBI-12811111">
        <id>Q8IUB9</id>
        <label>KRTAP19-1</label>
    </interactant>
    <organismsDiffer>false</organismsDiffer>
    <experiments>3</experiments>
</comment>
<comment type="interaction">
    <interactant intactId="EBI-715611">
        <id>Q9C086</id>
    </interactant>
    <interactant intactId="EBI-11962084">
        <id>Q3LI66</id>
        <label>KRTAP6-2</label>
    </interactant>
    <organismsDiffer>false</organismsDiffer>
    <experiments>3</experiments>
</comment>
<comment type="interaction">
    <interactant intactId="EBI-715611">
        <id>Q9C086</id>
    </interactant>
    <interactant intactId="EBI-2865388">
        <id>Q969G2</id>
        <label>LHX4</label>
    </interactant>
    <organismsDiffer>false</organismsDiffer>
    <experiments>3</experiments>
</comment>
<comment type="interaction">
    <interactant intactId="EBI-715611">
        <id>Q9C086</id>
    </interactant>
    <interactant intactId="EBI-12864460">
        <id>P48059-3</id>
        <label>LIMS1</label>
    </interactant>
    <organismsDiffer>false</organismsDiffer>
    <experiments>3</experiments>
</comment>
<comment type="interaction">
    <interactant intactId="EBI-715611">
        <id>Q9C086</id>
    </interactant>
    <interactant intactId="EBI-741037">
        <id>Q9BRK4</id>
        <label>LZTS2</label>
    </interactant>
    <organismsDiffer>false</organismsDiffer>
    <experiments>3</experiments>
</comment>
<comment type="interaction">
    <interactant intactId="EBI-715611">
        <id>Q9C086</id>
    </interactant>
    <interactant intactId="EBI-10172526">
        <id>Q9UJV3-2</id>
        <label>MID2</label>
    </interactant>
    <organismsDiffer>false</organismsDiffer>
    <experiments>3</experiments>
</comment>
<comment type="interaction">
    <interactant intactId="EBI-715611">
        <id>Q9C086</id>
    </interactant>
    <interactant intactId="EBI-2340269">
        <id>Q13064</id>
        <label>MKRN3</label>
    </interactant>
    <organismsDiffer>false</organismsDiffer>
    <experiments>3</experiments>
</comment>
<comment type="interaction">
    <interactant intactId="EBI-715611">
        <id>Q9C086</id>
    </interactant>
    <interactant intactId="EBI-9675802">
        <id>Q6PF18</id>
        <label>MORN3</label>
    </interactant>
    <organismsDiffer>false</organismsDiffer>
    <experiments>3</experiments>
</comment>
<comment type="interaction">
    <interactant intactId="EBI-715611">
        <id>Q9C086</id>
    </interactant>
    <interactant intactId="EBI-11522433">
        <id>Q5JR59-3</id>
        <label>MTUS2</label>
    </interactant>
    <organismsDiffer>false</organismsDiffer>
    <experiments>3</experiments>
</comment>
<comment type="interaction">
    <interactant intactId="EBI-715611">
        <id>Q9C086</id>
    </interactant>
    <interactant intactId="EBI-6952711">
        <id>Q8WY64</id>
        <label>MYLIP</label>
    </interactant>
    <organismsDiffer>false</organismsDiffer>
    <experiments>3</experiments>
</comment>
<comment type="interaction">
    <interactant intactId="EBI-715611">
        <id>Q9C086</id>
    </interactant>
    <interactant intactId="EBI-22310682">
        <id>P0DPK4</id>
        <label>NOTCH2NLC</label>
    </interactant>
    <organismsDiffer>false</organismsDiffer>
    <experiments>3</experiments>
</comment>
<comment type="interaction">
    <interactant intactId="EBI-715611">
        <id>Q9C086</id>
    </interactant>
    <interactant intactId="EBI-79165">
        <id>Q9NRD5</id>
        <label>PICK1</label>
    </interactant>
    <organismsDiffer>false</organismsDiffer>
    <experiments>3</experiments>
</comment>
<comment type="interaction">
    <interactant intactId="EBI-715611">
        <id>Q9C086</id>
    </interactant>
    <interactant intactId="EBI-11532361">
        <id>P78356-2</id>
        <label>PIP4K2B</label>
    </interactant>
    <organismsDiffer>false</organismsDiffer>
    <experiments>3</experiments>
</comment>
<comment type="interaction">
    <interactant intactId="EBI-715611">
        <id>Q9C086</id>
    </interactant>
    <interactant intactId="EBI-2876622">
        <id>Q9UPG8</id>
        <label>PLAGL2</label>
    </interactant>
    <organismsDiffer>false</organismsDiffer>
    <experiments>3</experiments>
</comment>
<comment type="interaction">
    <interactant intactId="EBI-715611">
        <id>Q9C086</id>
    </interactant>
    <interactant intactId="EBI-302345">
        <id>Q8ND90</id>
        <label>PNMA1</label>
    </interactant>
    <organismsDiffer>false</organismsDiffer>
    <experiments>3</experiments>
</comment>
<comment type="interaction">
    <interactant intactId="EBI-715611">
        <id>Q9C086</id>
    </interactant>
    <interactant intactId="EBI-302355">
        <id>Q9UL42</id>
        <label>PNMA2</label>
    </interactant>
    <organismsDiffer>false</organismsDiffer>
    <experiments>3</experiments>
</comment>
<comment type="interaction">
    <interactant intactId="EBI-715611">
        <id>Q9C086</id>
    </interactant>
    <interactant intactId="EBI-395290">
        <id>Q14498</id>
        <label>RBM39</label>
    </interactant>
    <organismsDiffer>false</organismsDiffer>
    <experiments>3</experiments>
</comment>
<comment type="interaction">
    <interactant intactId="EBI-715611">
        <id>Q9C086</id>
    </interactant>
    <interactant intactId="EBI-10182375">
        <id>Q9UFD9</id>
        <label>RIMBP3</label>
    </interactant>
    <organismsDiffer>false</organismsDiffer>
    <experiments>3</experiments>
</comment>
<comment type="interaction">
    <interactant intactId="EBI-715611">
        <id>Q9C086</id>
    </interactant>
    <interactant intactId="EBI-3928516">
        <id>Q9UN79</id>
        <label>SOX13</label>
    </interactant>
    <organismsDiffer>false</organismsDiffer>
    <experiments>3</experiments>
</comment>
<comment type="interaction">
    <interactant intactId="EBI-715611">
        <id>Q9C086</id>
    </interactant>
    <interactant intactId="EBI-2212028">
        <id>Q9Y2D8</id>
        <label>SSX2IP</label>
    </interactant>
    <organismsDiffer>false</organismsDiffer>
    <experiments>3</experiments>
</comment>
<comment type="interaction">
    <interactant intactId="EBI-715611">
        <id>Q9C086</id>
    </interactant>
    <interactant intactId="EBI-745680">
        <id>Q96MF2</id>
        <label>STAC3</label>
    </interactant>
    <organismsDiffer>false</organismsDiffer>
    <experiments>3</experiments>
</comment>
<comment type="interaction">
    <interactant intactId="EBI-715611">
        <id>Q9C086</id>
    </interactant>
    <interactant intactId="EBI-741515">
        <id>Q9NVV9</id>
        <label>THAP1</label>
    </interactant>
    <organismsDiffer>false</organismsDiffer>
    <experiments>3</experiments>
</comment>
<comment type="interaction">
    <interactant intactId="EBI-715611">
        <id>Q9C086</id>
    </interactant>
    <interactant intactId="EBI-11741437">
        <id>Q08117-2</id>
        <label>TLE5</label>
    </interactant>
    <organismsDiffer>false</organismsDiffer>
    <experiments>5</experiments>
</comment>
<comment type="interaction">
    <interactant intactId="EBI-715611">
        <id>Q9C086</id>
    </interactant>
    <interactant intactId="EBI-949753">
        <id>Q63HR2</id>
        <label>TNS2</label>
    </interactant>
    <organismsDiffer>false</organismsDiffer>
    <experiments>3</experiments>
</comment>
<comment type="interaction">
    <interactant intactId="EBI-715611">
        <id>Q9C086</id>
    </interactant>
    <interactant intactId="EBI-355744">
        <id>Q12933</id>
        <label>TRAF2</label>
    </interactant>
    <organismsDiffer>false</organismsDiffer>
    <experiments>3</experiments>
</comment>
<comment type="interaction">
    <interactant intactId="EBI-715611">
        <id>Q9C086</id>
    </interactant>
    <interactant intactId="EBI-492476">
        <id>Q96RU7</id>
        <label>TRIB3</label>
    </interactant>
    <organismsDiffer>false</organismsDiffer>
    <experiments>3</experiments>
</comment>
<comment type="interaction">
    <interactant intactId="EBI-715611">
        <id>Q9C086</id>
    </interactant>
    <interactant intactId="EBI-719493">
        <id>P14373</id>
        <label>TRIM27</label>
    </interactant>
    <organismsDiffer>false</organismsDiffer>
    <experiments>3</experiments>
</comment>
<comment type="interaction">
    <interactant intactId="EBI-715611">
        <id>Q9C086</id>
    </interactant>
    <interactant intactId="EBI-947459">
        <id>Q9H2G4</id>
        <label>TSPYL2</label>
    </interactant>
    <organismsDiffer>false</organismsDiffer>
    <experiments>3</experiments>
</comment>
<comment type="interaction">
    <interactant intactId="EBI-715611">
        <id>Q9C086</id>
    </interactant>
    <interactant intactId="EBI-11097439">
        <id>P26368-2</id>
        <label>U2AF2</label>
    </interactant>
    <organismsDiffer>false</organismsDiffer>
    <experiments>3</experiments>
</comment>
<comment type="interaction">
    <interactant intactId="EBI-715611">
        <id>Q9C086</id>
    </interactant>
    <interactant intactId="EBI-8601749">
        <id>Q495M9</id>
        <label>USH1G</label>
    </interactant>
    <organismsDiffer>false</organismsDiffer>
    <experiments>3</experiments>
</comment>
<comment type="interaction">
    <interactant intactId="EBI-715611">
        <id>Q9C086</id>
    </interactant>
    <interactant intactId="EBI-12111538">
        <id>Q8IY57-5</id>
        <label>YAF2</label>
    </interactant>
    <organismsDiffer>false</organismsDiffer>
    <experiments>3</experiments>
</comment>
<comment type="interaction">
    <interactant intactId="EBI-715611">
        <id>Q9C086</id>
    </interactant>
    <interactant intactId="EBI-11035148">
        <id>Q8TF50</id>
        <label>ZNF526</label>
    </interactant>
    <organismsDiffer>false</organismsDiffer>
    <experiments>3</experiments>
</comment>
<comment type="interaction">
    <interactant intactId="EBI-715611">
        <id>Q9C086</id>
    </interactant>
    <interactant intactId="EBI-2555731">
        <id>Q9H707</id>
        <label>ZNF552</label>
    </interactant>
    <organismsDiffer>false</organismsDiffer>
    <experiments>3</experiments>
</comment>
<comment type="interaction">
    <interactant intactId="EBI-715611">
        <id>Q9C086</id>
    </interactant>
    <interactant intactId="EBI-527853">
        <id>Q9UGI0</id>
        <label>ZRANB1</label>
    </interactant>
    <organismsDiffer>false</organismsDiffer>
    <experiments>3</experiments>
</comment>
<comment type="subcellular location">
    <subcellularLocation>
        <location evidence="4 6">Nucleus</location>
    </subcellularLocation>
    <subcellularLocation>
        <location evidence="4">Nucleus</location>
        <location evidence="4">Nucleolus</location>
    </subcellularLocation>
</comment>
<comment type="sequence caution" evidence="8">
    <conflict type="erroneous initiation">
        <sequence resource="EMBL-CDS" id="BAB21111"/>
    </conflict>
    <text>Truncated N-terminus.</text>
</comment>
<protein>
    <recommendedName>
        <fullName>INO80 complex subunit B</fullName>
    </recommendedName>
    <alternativeName>
        <fullName>High mobility group AT-hook 1-like 4</fullName>
    </alternativeName>
    <alternativeName>
        <fullName>IES2 homolog</fullName>
        <shortName>hIes2</shortName>
    </alternativeName>
    <alternativeName>
        <fullName>PAP-1-associated protein 1</fullName>
        <shortName>PAPA-1</shortName>
    </alternativeName>
    <alternativeName>
        <fullName>Zinc finger HIT domain-containing protein 4</fullName>
    </alternativeName>
</protein>